<gene>
    <name type="ordered locus">MIMI_R658</name>
</gene>
<keyword id="KW-1185">Reference proteome</keyword>
<keyword id="KW-0946">Virion</keyword>
<proteinExistence type="evidence at protein level"/>
<evidence type="ECO:0000269" key="1">
    <source>
    </source>
</evidence>
<name>YR658_MIMIV</name>
<organism>
    <name type="scientific">Acanthamoeba polyphaga mimivirus</name>
    <name type="common">APMV</name>
    <dbReference type="NCBI Taxonomy" id="212035"/>
    <lineage>
        <taxon>Viruses</taxon>
        <taxon>Varidnaviria</taxon>
        <taxon>Bamfordvirae</taxon>
        <taxon>Nucleocytoviricota</taxon>
        <taxon>Megaviricetes</taxon>
        <taxon>Imitervirales</taxon>
        <taxon>Mimiviridae</taxon>
        <taxon>Megamimivirinae</taxon>
        <taxon>Mimivirus</taxon>
        <taxon>Mimivirus bradfordmassiliense</taxon>
    </lineage>
</organism>
<organismHost>
    <name type="scientific">Acanthamoeba polyphaga</name>
    <name type="common">Amoeba</name>
    <dbReference type="NCBI Taxonomy" id="5757"/>
</organismHost>
<dbReference type="EMBL" id="AY653733">
    <property type="protein sequence ID" value="AAV50919.1"/>
    <property type="molecule type" value="Genomic_DNA"/>
</dbReference>
<dbReference type="KEGG" id="vg:9925303"/>
<dbReference type="OrthoDB" id="30064at10239"/>
<dbReference type="Proteomes" id="UP000001134">
    <property type="component" value="Genome"/>
</dbReference>
<dbReference type="GO" id="GO:0044423">
    <property type="term" value="C:virion component"/>
    <property type="evidence" value="ECO:0007669"/>
    <property type="project" value="UniProtKB-KW"/>
</dbReference>
<dbReference type="Gene3D" id="3.40.50.1240">
    <property type="entry name" value="Phosphoglycerate mutase-like"/>
    <property type="match status" value="1"/>
</dbReference>
<dbReference type="InterPro" id="IPR029033">
    <property type="entry name" value="His_PPase_superfam"/>
</dbReference>
<dbReference type="SUPFAM" id="SSF53254">
    <property type="entry name" value="Phosphoglycerate mutase-like"/>
    <property type="match status" value="1"/>
</dbReference>
<accession>Q5UR17</accession>
<protein>
    <recommendedName>
        <fullName>Uncharacterized protein R658</fullName>
    </recommendedName>
</protein>
<reference key="1">
    <citation type="journal article" date="2004" name="Science">
        <title>The 1.2-megabase genome sequence of Mimivirus.</title>
        <authorList>
            <person name="Raoult D."/>
            <person name="Audic S."/>
            <person name="Robert C."/>
            <person name="Abergel C."/>
            <person name="Renesto P."/>
            <person name="Ogata H."/>
            <person name="La Scola B."/>
            <person name="Susan M."/>
            <person name="Claverie J.-M."/>
        </authorList>
    </citation>
    <scope>NUCLEOTIDE SEQUENCE [LARGE SCALE GENOMIC DNA]</scope>
    <source>
        <strain>Rowbotham-Bradford</strain>
    </source>
</reference>
<reference key="2">
    <citation type="journal article" date="2006" name="J. Virol.">
        <title>Mimivirus giant particles incorporate a large fraction of anonymous and unique gene products.</title>
        <authorList>
            <person name="Renesto P."/>
            <person name="Abergel C."/>
            <person name="Decloquement P."/>
            <person name="Moinier D."/>
            <person name="Azza S."/>
            <person name="Ogata H."/>
            <person name="Fourquet P."/>
            <person name="Gorvel J.-P."/>
            <person name="Claverie J.-M."/>
            <person name="Raoult D."/>
        </authorList>
    </citation>
    <scope>IDENTIFICATION BY MASS SPECTROMETRY [LARGE SCALE ANALYSIS]</scope>
    <scope>SUBCELLULAR LOCATION</scope>
</reference>
<comment type="subcellular location">
    <subcellularLocation>
        <location evidence="1">Virion</location>
    </subcellularLocation>
</comment>
<sequence>MDKTHTEYIDLTREISELSDRQKKFDLESVTDSLDDLDYSDDSNSPENELEILPEDVHTKKIIIDWTRHAESCSNLDSNNVHDTDEYPLRKTGYDNLNSHDKYISEKSNTNAIMMARKMTSKVKALAMYHPNISYIGCQQAVLLGSYLTKKEYQYDAVFASPTVRSIMTALMICRGLKVTIYVVPYINEHTNLAGSKDNQNTPLNSTLLKKQILYIKDWLENNWINNFDDIYVMNVLGDLRKEMTNMVNNPYSEDIIKKIDYIFNCKPNLKKDGGNVNDYGQKCAIFEEINNIIKILDQKFSNAKKSNLIERGVFDEDLESIHDTLKKITDKKFIRGPSVNFTILEMLEKIESEKIPNDDKFFIHQNLRKSCLNKFYTKILPISFNLNFINRNKITIAIMCVSHGGAMKKYFKSKYPSKNIPDHVLNTQIFREAIFINDNAIEAYSIDFNYYVPRKIRATYSNFETLNIDICRLGSLKGILNYPLYSPEWESKIKPKLSFKTLPPVNYATPDSKFYFENKDKYQESITDYEIMGGFNFIHN</sequence>
<feature type="chain" id="PRO_0000251126" description="Uncharacterized protein R658">
    <location>
        <begin position="1"/>
        <end position="541"/>
    </location>
</feature>